<accession>P49384</accession>
<accession>Q6CVV7</accession>
<keyword id="KW-0479">Metal-binding</keyword>
<keyword id="KW-0496">Mitochondrion</keyword>
<keyword id="KW-0520">NAD</keyword>
<keyword id="KW-0560">Oxidoreductase</keyword>
<keyword id="KW-1185">Reference proteome</keyword>
<keyword id="KW-0809">Transit peptide</keyword>
<keyword id="KW-0862">Zinc</keyword>
<comment type="catalytic activity">
    <reaction>
        <text>a primary alcohol + NAD(+) = an aldehyde + NADH + H(+)</text>
        <dbReference type="Rhea" id="RHEA:10736"/>
        <dbReference type="ChEBI" id="CHEBI:15378"/>
        <dbReference type="ChEBI" id="CHEBI:15734"/>
        <dbReference type="ChEBI" id="CHEBI:17478"/>
        <dbReference type="ChEBI" id="CHEBI:57540"/>
        <dbReference type="ChEBI" id="CHEBI:57945"/>
        <dbReference type="EC" id="1.1.1.1"/>
    </reaction>
</comment>
<comment type="catalytic activity">
    <reaction>
        <text>a secondary alcohol + NAD(+) = a ketone + NADH + H(+)</text>
        <dbReference type="Rhea" id="RHEA:10740"/>
        <dbReference type="ChEBI" id="CHEBI:15378"/>
        <dbReference type="ChEBI" id="CHEBI:17087"/>
        <dbReference type="ChEBI" id="CHEBI:35681"/>
        <dbReference type="ChEBI" id="CHEBI:57540"/>
        <dbReference type="ChEBI" id="CHEBI:57945"/>
        <dbReference type="EC" id="1.1.1.1"/>
    </reaction>
</comment>
<comment type="cofactor">
    <cofactor evidence="1">
        <name>Zn(2+)</name>
        <dbReference type="ChEBI" id="CHEBI:29105"/>
    </cofactor>
    <text evidence="1">Binds 2 Zn(2+) ions per subunit.</text>
</comment>
<comment type="subunit">
    <text evidence="1">Homotetramer.</text>
</comment>
<comment type="subcellular location">
    <subcellularLocation>
        <location>Mitochondrion matrix</location>
    </subcellularLocation>
</comment>
<comment type="similarity">
    <text evidence="3">Belongs to the zinc-containing alcohol dehydrogenase family.</text>
</comment>
<reference key="1">
    <citation type="journal article" date="1991" name="Yeast">
        <title>Two genes encoding putative mitochondrial alcohol dehydrogenases are present in the yeast Kluyveromyces lactis.</title>
        <authorList>
            <person name="Saliola M."/>
            <person name="Gonnella R."/>
            <person name="Mazzoni C."/>
            <person name="Falcone C."/>
        </authorList>
    </citation>
    <scope>NUCLEOTIDE SEQUENCE [GENOMIC DNA]</scope>
</reference>
<reference key="2">
    <citation type="journal article" date="2004" name="Nature">
        <title>Genome evolution in yeasts.</title>
        <authorList>
            <person name="Dujon B."/>
            <person name="Sherman D."/>
            <person name="Fischer G."/>
            <person name="Durrens P."/>
            <person name="Casaregola S."/>
            <person name="Lafontaine I."/>
            <person name="de Montigny J."/>
            <person name="Marck C."/>
            <person name="Neuveglise C."/>
            <person name="Talla E."/>
            <person name="Goffard N."/>
            <person name="Frangeul L."/>
            <person name="Aigle M."/>
            <person name="Anthouard V."/>
            <person name="Babour A."/>
            <person name="Barbe V."/>
            <person name="Barnay S."/>
            <person name="Blanchin S."/>
            <person name="Beckerich J.-M."/>
            <person name="Beyne E."/>
            <person name="Bleykasten C."/>
            <person name="Boisrame A."/>
            <person name="Boyer J."/>
            <person name="Cattolico L."/>
            <person name="Confanioleri F."/>
            <person name="de Daruvar A."/>
            <person name="Despons L."/>
            <person name="Fabre E."/>
            <person name="Fairhead C."/>
            <person name="Ferry-Dumazet H."/>
            <person name="Groppi A."/>
            <person name="Hantraye F."/>
            <person name="Hennequin C."/>
            <person name="Jauniaux N."/>
            <person name="Joyet P."/>
            <person name="Kachouri R."/>
            <person name="Kerrest A."/>
            <person name="Koszul R."/>
            <person name="Lemaire M."/>
            <person name="Lesur I."/>
            <person name="Ma L."/>
            <person name="Muller H."/>
            <person name="Nicaud J.-M."/>
            <person name="Nikolski M."/>
            <person name="Oztas S."/>
            <person name="Ozier-Kalogeropoulos O."/>
            <person name="Pellenz S."/>
            <person name="Potier S."/>
            <person name="Richard G.-F."/>
            <person name="Straub M.-L."/>
            <person name="Suleau A."/>
            <person name="Swennen D."/>
            <person name="Tekaia F."/>
            <person name="Wesolowski-Louvel M."/>
            <person name="Westhof E."/>
            <person name="Wirth B."/>
            <person name="Zeniou-Meyer M."/>
            <person name="Zivanovic Y."/>
            <person name="Bolotin-Fukuhara M."/>
            <person name="Thierry A."/>
            <person name="Bouchier C."/>
            <person name="Caudron B."/>
            <person name="Scarpelli C."/>
            <person name="Gaillardin C."/>
            <person name="Weissenbach J."/>
            <person name="Wincker P."/>
            <person name="Souciet J.-L."/>
        </authorList>
    </citation>
    <scope>NUCLEOTIDE SEQUENCE [LARGE SCALE GENOMIC DNA]</scope>
    <source>
        <strain>ATCC 8585 / CBS 2359 / DSM 70799 / NBRC 1267 / NRRL Y-1140 / WM37</strain>
    </source>
</reference>
<gene>
    <name type="primary">ADH3</name>
    <name type="ordered locus">KLLA0B09064g</name>
</gene>
<proteinExistence type="inferred from homology"/>
<name>ADH3_KLULA</name>
<evidence type="ECO:0000250" key="1"/>
<evidence type="ECO:0000255" key="2"/>
<evidence type="ECO:0000305" key="3"/>
<feature type="transit peptide" description="Mitochondrion" evidence="2">
    <location>
        <begin position="1"/>
        <end position="26"/>
    </location>
</feature>
<feature type="chain" id="PRO_0000000877" description="Alcohol dehydrogenase 3, mitochondrial">
    <location>
        <begin position="27"/>
        <end position="374"/>
    </location>
</feature>
<feature type="binding site" evidence="1">
    <location>
        <position position="70"/>
    </location>
    <ligand>
        <name>Zn(2+)</name>
        <dbReference type="ChEBI" id="CHEBI:29105"/>
        <label>1</label>
        <note>catalytic</note>
    </ligand>
</feature>
<feature type="binding site" evidence="1">
    <location>
        <position position="93"/>
    </location>
    <ligand>
        <name>Zn(2+)</name>
        <dbReference type="ChEBI" id="CHEBI:29105"/>
        <label>1</label>
        <note>catalytic</note>
    </ligand>
</feature>
<feature type="binding site" evidence="1">
    <location>
        <position position="124"/>
    </location>
    <ligand>
        <name>Zn(2+)</name>
        <dbReference type="ChEBI" id="CHEBI:29105"/>
        <label>2</label>
    </ligand>
</feature>
<feature type="binding site" evidence="1">
    <location>
        <position position="127"/>
    </location>
    <ligand>
        <name>Zn(2+)</name>
        <dbReference type="ChEBI" id="CHEBI:29105"/>
        <label>2</label>
    </ligand>
</feature>
<feature type="binding site" evidence="1">
    <location>
        <position position="130"/>
    </location>
    <ligand>
        <name>Zn(2+)</name>
        <dbReference type="ChEBI" id="CHEBI:29105"/>
        <label>2</label>
    </ligand>
</feature>
<feature type="binding site" evidence="1">
    <location>
        <position position="138"/>
    </location>
    <ligand>
        <name>Zn(2+)</name>
        <dbReference type="ChEBI" id="CHEBI:29105"/>
        <label>2</label>
    </ligand>
</feature>
<feature type="binding site" evidence="1">
    <location>
        <position position="180"/>
    </location>
    <ligand>
        <name>Zn(2+)</name>
        <dbReference type="ChEBI" id="CHEBI:29105"/>
        <label>1</label>
        <note>catalytic</note>
    </ligand>
</feature>
<feature type="binding site" evidence="1">
    <location>
        <begin position="204"/>
        <end position="210"/>
    </location>
    <ligand>
        <name>NAD(+)</name>
        <dbReference type="ChEBI" id="CHEBI:57540"/>
    </ligand>
</feature>
<feature type="binding site" evidence="1">
    <location>
        <position position="228"/>
    </location>
    <ligand>
        <name>NAD(+)</name>
        <dbReference type="ChEBI" id="CHEBI:57540"/>
    </ligand>
</feature>
<feature type="binding site" evidence="1">
    <location>
        <position position="233"/>
    </location>
    <ligand>
        <name>NAD(+)</name>
        <dbReference type="ChEBI" id="CHEBI:57540"/>
    </ligand>
</feature>
<feature type="binding site" evidence="1">
    <location>
        <begin position="295"/>
        <end position="297"/>
    </location>
    <ligand>
        <name>NAD(+)</name>
        <dbReference type="ChEBI" id="CHEBI:57540"/>
    </ligand>
</feature>
<feature type="binding site" evidence="1">
    <location>
        <position position="367"/>
    </location>
    <ligand>
        <name>NAD(+)</name>
        <dbReference type="ChEBI" id="CHEBI:57540"/>
    </ligand>
</feature>
<feature type="sequence conflict" description="In Ref. 1; CAA44613." evidence="3" ref="1">
    <original>A</original>
    <variation>R</variation>
    <location>
        <position position="156"/>
    </location>
</feature>
<feature type="sequence conflict" description="In Ref. 1; CAA44613." evidence="3" ref="1">
    <original>I</original>
    <variation>T</variation>
    <location>
        <position position="178"/>
    </location>
</feature>
<sequence length="374" mass="39609">MLRLTSARSIVSPLRKGAFGSIRTLATSVPETQKGVIFYENGGKLEYKDIPVPKPKPNEILINVKYSGVCHTDLHAWKGDWPLPTKLPLVGGHEGAGVVVAMGENVKGWNIGDFAGIKWLNGSCMSCEYCELSNESNCPDADLSGYTHDGSFQQYATADAVQAARIPKGTDLAEVAPILCAGVTVYKALKSANLKAGDWVAISGAAGGLGSLAVQYAKAMGYRVVGIDGGEEKGKLVKQLGGEAFVDFTKTKDMVAEIQEITNGGPHGVINVSVSEAAMNASTQFVRPTGTVVLVGLPAGAVIKSEVFSHVVKSINIKGSYVGNRADTREAINFFANGHVHSPIKVVGLSELPKVYELMEQGKILGRYVVDTSN</sequence>
<organism>
    <name type="scientific">Kluyveromyces lactis (strain ATCC 8585 / CBS 2359 / DSM 70799 / NBRC 1267 / NRRL Y-1140 / WM37)</name>
    <name type="common">Yeast</name>
    <name type="synonym">Candida sphaerica</name>
    <dbReference type="NCBI Taxonomy" id="284590"/>
    <lineage>
        <taxon>Eukaryota</taxon>
        <taxon>Fungi</taxon>
        <taxon>Dikarya</taxon>
        <taxon>Ascomycota</taxon>
        <taxon>Saccharomycotina</taxon>
        <taxon>Saccharomycetes</taxon>
        <taxon>Saccharomycetales</taxon>
        <taxon>Saccharomycetaceae</taxon>
        <taxon>Kluyveromyces</taxon>
    </lineage>
</organism>
<dbReference type="EC" id="1.1.1.1"/>
<dbReference type="EMBL" id="X62766">
    <property type="protein sequence ID" value="CAA44613.1"/>
    <property type="molecule type" value="Genomic_DNA"/>
</dbReference>
<dbReference type="EMBL" id="CR382122">
    <property type="protein sequence ID" value="CAH02325.1"/>
    <property type="molecule type" value="Genomic_DNA"/>
</dbReference>
<dbReference type="PIR" id="S17252">
    <property type="entry name" value="S17252"/>
</dbReference>
<dbReference type="RefSeq" id="XP_451932.1">
    <property type="nucleotide sequence ID" value="XM_451932.1"/>
</dbReference>
<dbReference type="SMR" id="P49384"/>
<dbReference type="STRING" id="284590.P49384"/>
<dbReference type="PaxDb" id="284590-P49384"/>
<dbReference type="KEGG" id="kla:KLLA0_B09064g"/>
<dbReference type="eggNOG" id="KOG0023">
    <property type="taxonomic scope" value="Eukaryota"/>
</dbReference>
<dbReference type="HOGENOM" id="CLU_026673_20_1_1"/>
<dbReference type="InParanoid" id="P49384"/>
<dbReference type="OMA" id="LMAGHWV"/>
<dbReference type="BRENDA" id="1.1.1.2">
    <property type="organism ID" value="2825"/>
</dbReference>
<dbReference type="SABIO-RK" id="P49384"/>
<dbReference type="Proteomes" id="UP000000598">
    <property type="component" value="Chromosome B"/>
</dbReference>
<dbReference type="GO" id="GO:0005759">
    <property type="term" value="C:mitochondrial matrix"/>
    <property type="evidence" value="ECO:0007669"/>
    <property type="project" value="UniProtKB-SubCell"/>
</dbReference>
<dbReference type="GO" id="GO:0004022">
    <property type="term" value="F:alcohol dehydrogenase (NAD+) activity"/>
    <property type="evidence" value="ECO:0007669"/>
    <property type="project" value="UniProtKB-EC"/>
</dbReference>
<dbReference type="GO" id="GO:0008270">
    <property type="term" value="F:zinc ion binding"/>
    <property type="evidence" value="ECO:0007669"/>
    <property type="project" value="InterPro"/>
</dbReference>
<dbReference type="CDD" id="cd08297">
    <property type="entry name" value="CAD3"/>
    <property type="match status" value="1"/>
</dbReference>
<dbReference type="FunFam" id="3.40.50.720:FF:000039">
    <property type="entry name" value="Alcohol dehydrogenase AdhP"/>
    <property type="match status" value="1"/>
</dbReference>
<dbReference type="FunFam" id="3.90.180.10:FF:000002">
    <property type="entry name" value="Alcohol dehydrogenase AdhP"/>
    <property type="match status" value="1"/>
</dbReference>
<dbReference type="Gene3D" id="3.90.180.10">
    <property type="entry name" value="Medium-chain alcohol dehydrogenases, catalytic domain"/>
    <property type="match status" value="1"/>
</dbReference>
<dbReference type="Gene3D" id="3.40.50.720">
    <property type="entry name" value="NAD(P)-binding Rossmann-like Domain"/>
    <property type="match status" value="1"/>
</dbReference>
<dbReference type="InterPro" id="IPR013149">
    <property type="entry name" value="ADH-like_C"/>
</dbReference>
<dbReference type="InterPro" id="IPR013154">
    <property type="entry name" value="ADH-like_N"/>
</dbReference>
<dbReference type="InterPro" id="IPR002328">
    <property type="entry name" value="ADH_Zn_CS"/>
</dbReference>
<dbReference type="InterPro" id="IPR011032">
    <property type="entry name" value="GroES-like_sf"/>
</dbReference>
<dbReference type="InterPro" id="IPR036291">
    <property type="entry name" value="NAD(P)-bd_dom_sf"/>
</dbReference>
<dbReference type="InterPro" id="IPR020843">
    <property type="entry name" value="PKS_ER"/>
</dbReference>
<dbReference type="PANTHER" id="PTHR42940">
    <property type="entry name" value="ALCOHOL DEHYDROGENASE 1-RELATED"/>
    <property type="match status" value="1"/>
</dbReference>
<dbReference type="PANTHER" id="PTHR42940:SF3">
    <property type="entry name" value="ALCOHOL DEHYDROGENASE 1-RELATED"/>
    <property type="match status" value="1"/>
</dbReference>
<dbReference type="Pfam" id="PF08240">
    <property type="entry name" value="ADH_N"/>
    <property type="match status" value="1"/>
</dbReference>
<dbReference type="Pfam" id="PF00107">
    <property type="entry name" value="ADH_zinc_N"/>
    <property type="match status" value="1"/>
</dbReference>
<dbReference type="SMART" id="SM00829">
    <property type="entry name" value="PKS_ER"/>
    <property type="match status" value="1"/>
</dbReference>
<dbReference type="SUPFAM" id="SSF50129">
    <property type="entry name" value="GroES-like"/>
    <property type="match status" value="1"/>
</dbReference>
<dbReference type="SUPFAM" id="SSF51735">
    <property type="entry name" value="NAD(P)-binding Rossmann-fold domains"/>
    <property type="match status" value="1"/>
</dbReference>
<dbReference type="PROSITE" id="PS00059">
    <property type="entry name" value="ADH_ZINC"/>
    <property type="match status" value="1"/>
</dbReference>
<protein>
    <recommendedName>
        <fullName>Alcohol dehydrogenase 3, mitochondrial</fullName>
        <ecNumber>1.1.1.1</ecNumber>
    </recommendedName>
    <alternativeName>
        <fullName>Alcohol dehydrogenase III</fullName>
    </alternativeName>
</protein>